<gene>
    <name evidence="1" type="primary">dadA</name>
    <name type="ordered locus">EC55989_1284</name>
</gene>
<keyword id="KW-0274">FAD</keyword>
<keyword id="KW-0285">Flavoprotein</keyword>
<keyword id="KW-0560">Oxidoreductase</keyword>
<keyword id="KW-1185">Reference proteome</keyword>
<name>DADA_ECO55</name>
<feature type="chain" id="PRO_1000164640" description="D-amino acid dehydrogenase">
    <location>
        <begin position="1"/>
        <end position="432"/>
    </location>
</feature>
<feature type="binding site" evidence="1">
    <location>
        <begin position="3"/>
        <end position="17"/>
    </location>
    <ligand>
        <name>FAD</name>
        <dbReference type="ChEBI" id="CHEBI:57692"/>
    </ligand>
</feature>
<proteinExistence type="inferred from homology"/>
<organism>
    <name type="scientific">Escherichia coli (strain 55989 / EAEC)</name>
    <dbReference type="NCBI Taxonomy" id="585055"/>
    <lineage>
        <taxon>Bacteria</taxon>
        <taxon>Pseudomonadati</taxon>
        <taxon>Pseudomonadota</taxon>
        <taxon>Gammaproteobacteria</taxon>
        <taxon>Enterobacterales</taxon>
        <taxon>Enterobacteriaceae</taxon>
        <taxon>Escherichia</taxon>
    </lineage>
</organism>
<sequence length="432" mass="47607">MRVVILGSGVVGVASAWYLNQAGHEVTVIDREPGAALETSAANAGQISPGYAAPWAAPGVPLKAIKWMFQRHAPLAVRLDGTQFQLKWMWQMLRNCDTSHYMENKGRMVRLAEYSRDCLKALRAETNIQYEGRQGGTLQLFRTEQQYENATRDIAVLEDAGVPYQLLESSRLAEVEPALAEVAHKLTGGLQLPNDETGDCQLFTQNLARMAEQAGVKFRFNTPVDQLLCDGEQIYGVKCGDEVIKADAYVMAFGSYSTAMLKGIVDIPVYPLKGYSLTIPIAQEDGAPVSTILDETYKIAITRFDNRIRVGGMAEIVGFNTELLQPRRETLEMVVRDLYPRGGHVEQATFWTGLRPMTPDGTPVVGRTRFKNLWLNTGHGTLGWTMACGSGQLLSDLLSGRTPAIPYEDLSVARYSRGFTPSRPGHLHGAHS</sequence>
<accession>B7LGU9</accession>
<dbReference type="EC" id="1.4.99.-" evidence="1"/>
<dbReference type="EMBL" id="CU928145">
    <property type="protein sequence ID" value="CAU97143.1"/>
    <property type="molecule type" value="Genomic_DNA"/>
</dbReference>
<dbReference type="RefSeq" id="WP_001266908.1">
    <property type="nucleotide sequence ID" value="NC_011748.1"/>
</dbReference>
<dbReference type="SMR" id="B7LGU9"/>
<dbReference type="GeneID" id="93776243"/>
<dbReference type="KEGG" id="eck:EC55989_1284"/>
<dbReference type="HOGENOM" id="CLU_007884_9_2_6"/>
<dbReference type="UniPathway" id="UPA00043">
    <property type="reaction ID" value="UER00498"/>
</dbReference>
<dbReference type="Proteomes" id="UP000000746">
    <property type="component" value="Chromosome"/>
</dbReference>
<dbReference type="GO" id="GO:0005737">
    <property type="term" value="C:cytoplasm"/>
    <property type="evidence" value="ECO:0007669"/>
    <property type="project" value="TreeGrafter"/>
</dbReference>
<dbReference type="GO" id="GO:0005886">
    <property type="term" value="C:plasma membrane"/>
    <property type="evidence" value="ECO:0007669"/>
    <property type="project" value="TreeGrafter"/>
</dbReference>
<dbReference type="GO" id="GO:0008718">
    <property type="term" value="F:D-amino-acid dehydrogenase activity"/>
    <property type="evidence" value="ECO:0007669"/>
    <property type="project" value="UniProtKB-UniRule"/>
</dbReference>
<dbReference type="GO" id="GO:0055130">
    <property type="term" value="P:D-alanine catabolic process"/>
    <property type="evidence" value="ECO:0007669"/>
    <property type="project" value="UniProtKB-UniPathway"/>
</dbReference>
<dbReference type="FunFam" id="3.50.50.60:FF:000020">
    <property type="entry name" value="D-amino acid dehydrogenase"/>
    <property type="match status" value="1"/>
</dbReference>
<dbReference type="Gene3D" id="3.30.9.10">
    <property type="entry name" value="D-Amino Acid Oxidase, subunit A, domain 2"/>
    <property type="match status" value="1"/>
</dbReference>
<dbReference type="Gene3D" id="3.50.50.60">
    <property type="entry name" value="FAD/NAD(P)-binding domain"/>
    <property type="match status" value="2"/>
</dbReference>
<dbReference type="HAMAP" id="MF_01202">
    <property type="entry name" value="DadA"/>
    <property type="match status" value="1"/>
</dbReference>
<dbReference type="InterPro" id="IPR023080">
    <property type="entry name" value="DadA"/>
</dbReference>
<dbReference type="InterPro" id="IPR006076">
    <property type="entry name" value="FAD-dep_OxRdtase"/>
</dbReference>
<dbReference type="InterPro" id="IPR036188">
    <property type="entry name" value="FAD/NAD-bd_sf"/>
</dbReference>
<dbReference type="NCBIfam" id="NF001933">
    <property type="entry name" value="PRK00711.1"/>
    <property type="match status" value="1"/>
</dbReference>
<dbReference type="PANTHER" id="PTHR13847:SF280">
    <property type="entry name" value="D-AMINO ACID DEHYDROGENASE"/>
    <property type="match status" value="1"/>
</dbReference>
<dbReference type="PANTHER" id="PTHR13847">
    <property type="entry name" value="SARCOSINE DEHYDROGENASE-RELATED"/>
    <property type="match status" value="1"/>
</dbReference>
<dbReference type="Pfam" id="PF01266">
    <property type="entry name" value="DAO"/>
    <property type="match status" value="1"/>
</dbReference>
<dbReference type="SUPFAM" id="SSF54373">
    <property type="entry name" value="FAD-linked reductases, C-terminal domain"/>
    <property type="match status" value="1"/>
</dbReference>
<dbReference type="SUPFAM" id="SSF51905">
    <property type="entry name" value="FAD/NAD(P)-binding domain"/>
    <property type="match status" value="1"/>
</dbReference>
<evidence type="ECO:0000255" key="1">
    <source>
        <dbReference type="HAMAP-Rule" id="MF_01202"/>
    </source>
</evidence>
<protein>
    <recommendedName>
        <fullName evidence="1">D-amino acid dehydrogenase</fullName>
        <ecNumber evidence="1">1.4.99.-</ecNumber>
    </recommendedName>
</protein>
<comment type="function">
    <text evidence="1">Oxidative deamination of D-amino acids.</text>
</comment>
<comment type="catalytic activity">
    <reaction evidence="1">
        <text>a D-alpha-amino acid + A + H2O = a 2-oxocarboxylate + AH2 + NH4(+)</text>
        <dbReference type="Rhea" id="RHEA:18125"/>
        <dbReference type="ChEBI" id="CHEBI:13193"/>
        <dbReference type="ChEBI" id="CHEBI:15377"/>
        <dbReference type="ChEBI" id="CHEBI:17499"/>
        <dbReference type="ChEBI" id="CHEBI:28938"/>
        <dbReference type="ChEBI" id="CHEBI:35179"/>
        <dbReference type="ChEBI" id="CHEBI:59871"/>
    </reaction>
</comment>
<comment type="cofactor">
    <cofactor evidence="1">
        <name>FAD</name>
        <dbReference type="ChEBI" id="CHEBI:57692"/>
    </cofactor>
</comment>
<comment type="pathway">
    <text>Amino-acid degradation; D-alanine degradation; NH(3) and pyruvate from D-alanine: step 1/1.</text>
</comment>
<comment type="similarity">
    <text evidence="1">Belongs to the DadA oxidoreductase family.</text>
</comment>
<reference key="1">
    <citation type="journal article" date="2009" name="PLoS Genet.">
        <title>Organised genome dynamics in the Escherichia coli species results in highly diverse adaptive paths.</title>
        <authorList>
            <person name="Touchon M."/>
            <person name="Hoede C."/>
            <person name="Tenaillon O."/>
            <person name="Barbe V."/>
            <person name="Baeriswyl S."/>
            <person name="Bidet P."/>
            <person name="Bingen E."/>
            <person name="Bonacorsi S."/>
            <person name="Bouchier C."/>
            <person name="Bouvet O."/>
            <person name="Calteau A."/>
            <person name="Chiapello H."/>
            <person name="Clermont O."/>
            <person name="Cruveiller S."/>
            <person name="Danchin A."/>
            <person name="Diard M."/>
            <person name="Dossat C."/>
            <person name="Karoui M.E."/>
            <person name="Frapy E."/>
            <person name="Garry L."/>
            <person name="Ghigo J.M."/>
            <person name="Gilles A.M."/>
            <person name="Johnson J."/>
            <person name="Le Bouguenec C."/>
            <person name="Lescat M."/>
            <person name="Mangenot S."/>
            <person name="Martinez-Jehanne V."/>
            <person name="Matic I."/>
            <person name="Nassif X."/>
            <person name="Oztas S."/>
            <person name="Petit M.A."/>
            <person name="Pichon C."/>
            <person name="Rouy Z."/>
            <person name="Ruf C.S."/>
            <person name="Schneider D."/>
            <person name="Tourret J."/>
            <person name="Vacherie B."/>
            <person name="Vallenet D."/>
            <person name="Medigue C."/>
            <person name="Rocha E.P.C."/>
            <person name="Denamur E."/>
        </authorList>
    </citation>
    <scope>NUCLEOTIDE SEQUENCE [LARGE SCALE GENOMIC DNA]</scope>
    <source>
        <strain>55989 / EAEC</strain>
    </source>
</reference>